<organism>
    <name type="scientific">Isfahan virus</name>
    <name type="common">ISFV</name>
    <dbReference type="NCBI Taxonomy" id="290008"/>
    <lineage>
        <taxon>Viruses</taxon>
        <taxon>Riboviria</taxon>
        <taxon>Orthornavirae</taxon>
        <taxon>Negarnaviricota</taxon>
        <taxon>Haploviricotina</taxon>
        <taxon>Monjiviricetes</taxon>
        <taxon>Mononegavirales</taxon>
        <taxon>Rhabdoviridae</taxon>
        <taxon>Alpharhabdovirinae</taxon>
        <taxon>Vesiculovirus</taxon>
        <taxon>Vesiculovirus isfahan</taxon>
    </lineage>
</organism>
<organismHost>
    <name type="scientific">Gerbillinae</name>
    <name type="common">gerbils</name>
    <dbReference type="NCBI Taxonomy" id="10045"/>
</organismHost>
<organismHost>
    <name type="scientific">Homo sapiens</name>
    <name type="common">Human</name>
    <dbReference type="NCBI Taxonomy" id="9606"/>
</organismHost>
<organismHost>
    <name type="scientific">Phlebotomus papatasi</name>
    <name type="common">Sandfly</name>
    <dbReference type="NCBI Taxonomy" id="29031"/>
</organismHost>
<keyword id="KW-0053">Apoptosis</keyword>
<keyword id="KW-1035">Host cytoplasm</keyword>
<keyword id="KW-1043">Host membrane</keyword>
<keyword id="KW-1048">Host nucleus</keyword>
<keyword id="KW-0945">Host-virus interaction</keyword>
<keyword id="KW-0472">Membrane</keyword>
<keyword id="KW-0597">Phosphoprotein</keyword>
<keyword id="KW-1198">Viral budding</keyword>
<keyword id="KW-1187">Viral budding via the host ESCRT complexes</keyword>
<keyword id="KW-0468">Viral matrix protein</keyword>
<keyword id="KW-1188">Viral release from host cell</keyword>
<keyword id="KW-0946">Virion</keyword>
<name>MATRX_ISFV</name>
<comment type="function">
    <text evidence="1">Forms a double layer around the helical nucleocapsid, the inner matrix layer binding to the N helix and the outer matrix layer binding to the envelope glycoprotein. Plays a major role in assembly and budding of virion, by recruiting cellular partners of the ESCRT complexes that play a key role in releasing the budding particle from the host membrane. Condensates the ribonucleocapsid core during virus assembly. Inhibits the host mRNA nuclear export thereby inducing the shut off of cellular transcription and preventing the interferon signaling and the establishment of antiviral state in infected cells. This shutoff presumably inhibits interferon signaling and thus establishment of antiviral state in virus infected cells. Induces cell-rounding, cytoskeleton disorganization and apoptosis in infected cell. Inhibits host transcription, possibly through interaction with host DNA repair factor IIH/TFIIH GTF2H5 subunit.</text>
</comment>
<comment type="subunit">
    <text evidence="1 2">Homomultimer. Interacts with viral nucleocapsid; this interaction contributes to the virion assembly (By similarity). Interacts with the viral envelope glycoprotein; this interaction contributes to the virion assembly (By similarity). Interacts with host RAE1-NUP98 complex. Interacts with host NEDD4 and TSG101. Interacts with host dynamin. Interacts with host NDUFAF4; the interaction inhibits viral propagation and is independent of interferon activation. Interacts with host GTF2H5; the interaction may inhibit host transcription (By similarity).</text>
</comment>
<comment type="interaction">
    <interactant intactId="EBI-40246199">
        <id>Q5K2K5</id>
    </interactant>
    <interactant intactId="EBI-1564678">
        <id>Q96J02</id>
        <label>ITCH</label>
    </interactant>
    <organismsDiffer>true</organismsDiffer>
    <experiments>2</experiments>
</comment>
<comment type="subcellular location">
    <subcellularLocation>
        <location evidence="1">Virion</location>
    </subcellularLocation>
    <subcellularLocation>
        <location evidence="1">Host endomembrane system</location>
        <topology evidence="1">Peripheral membrane protein</topology>
    </subcellularLocation>
    <subcellularLocation>
        <location evidence="1">Host nucleus membrane</location>
        <topology evidence="1">Peripheral membrane protein</topology>
    </subcellularLocation>
    <subcellularLocation>
        <location evidence="1">Host nucleus</location>
    </subcellularLocation>
    <subcellularLocation>
        <location evidence="1">Host cytoplasm</location>
    </subcellularLocation>
    <text evidence="1">In the virion, forms a double layer around the helical nucleocapsid, the inner matrix layer binding to the N helix and the outer matrix layer binding to the envelope glycoprotein. About 2480 copies of M are present in the virion.</text>
</comment>
<comment type="domain">
    <text evidence="1">Late-budding domains (L domains) are short sequence motifs essential for viral particle budding. They recruit proteins of the host ESCRT machinery (Endosomal Sorting Complex Required for Transport) or ESCRT-associated proteins. M contains two overlapping L domains: a PPXY motif which interacts with the WW domain 3 of NEDD4 and a PTAP/PSAP motif, which interacts with the UEV domain of TSG101.</text>
</comment>
<comment type="PTM">
    <text evidence="1">Phosphorylated by host.</text>
</comment>
<comment type="similarity">
    <text evidence="3">Belongs to the vesiculoviruses matrix protein family.</text>
</comment>
<reference key="1">
    <citation type="journal article" date="2005" name="Arch. Virol.">
        <title>Complete genome sequences of Chandipura and Isfahan vesiculoviruses.</title>
        <authorList>
            <person name="Marriott A.C."/>
        </authorList>
    </citation>
    <scope>NUCLEOTIDE SEQUENCE [GENOMIC RNA]</scope>
</reference>
<sequence>MKSLKRLIKSNKKKGDKKNVSFMDWDEPPSYSDSRYGCYPSAPLFGVDEMMETLPTLGIQSLKIQYKCSLQVRAETPFTSFNDAARCISLWETDYRGYAGKKPFYRLLMLIATKKLRAAPMSLMDGNRPEYSSMIQGQSIVHHSLGVIPPMMHVPETFTREWNLLTNKGMITAQIWLGITDVVDDLNPLINPALFSDEKEMTLTSQMFGLELKKRNDNTWLISKSY</sequence>
<feature type="chain" id="PRO_0000287255" description="Matrix protein">
    <location>
        <begin position="1"/>
        <end position="226"/>
    </location>
</feature>
<feature type="short sequence motif" description="dynamin binding" evidence="1">
    <location>
        <begin position="2"/>
        <end position="4"/>
    </location>
</feature>
<feature type="short sequence motif" description="PPXY motif" evidence="1">
    <location>
        <begin position="28"/>
        <end position="31"/>
    </location>
</feature>
<feature type="short sequence motif" description="PTAP/PSAP motif" evidence="1">
    <location>
        <begin position="40"/>
        <end position="43"/>
    </location>
</feature>
<protein>
    <recommendedName>
        <fullName>Matrix protein</fullName>
    </recommendedName>
</protein>
<evidence type="ECO:0000250" key="1">
    <source>
        <dbReference type="UniProtKB" id="P03519"/>
    </source>
</evidence>
<evidence type="ECO:0000250" key="2">
    <source>
        <dbReference type="UniProtKB" id="P08325"/>
    </source>
</evidence>
<evidence type="ECO:0000305" key="3"/>
<proteinExistence type="evidence at protein level"/>
<gene>
    <name type="primary">M</name>
</gene>
<dbReference type="EMBL" id="AJ810084">
    <property type="protein sequence ID" value="CAH17546.1"/>
    <property type="molecule type" value="Genomic_RNA"/>
</dbReference>
<dbReference type="RefSeq" id="YP_007641384.1">
    <property type="nucleotide sequence ID" value="NC_020806.1"/>
</dbReference>
<dbReference type="SMR" id="Q5K2K5"/>
<dbReference type="IntAct" id="Q5K2K5">
    <property type="interactions" value="6"/>
</dbReference>
<dbReference type="GeneID" id="14857917"/>
<dbReference type="KEGG" id="vg:14857917"/>
<dbReference type="OrthoDB" id="9191at10239"/>
<dbReference type="Proteomes" id="UP000204017">
    <property type="component" value="Genome"/>
</dbReference>
<dbReference type="GO" id="GO:0030430">
    <property type="term" value="C:host cell cytoplasm"/>
    <property type="evidence" value="ECO:0007669"/>
    <property type="project" value="UniProtKB-SubCell"/>
</dbReference>
<dbReference type="GO" id="GO:0044200">
    <property type="term" value="C:host cell nuclear membrane"/>
    <property type="evidence" value="ECO:0007669"/>
    <property type="project" value="UniProtKB-SubCell"/>
</dbReference>
<dbReference type="GO" id="GO:0016020">
    <property type="term" value="C:membrane"/>
    <property type="evidence" value="ECO:0007669"/>
    <property type="project" value="UniProtKB-KW"/>
</dbReference>
<dbReference type="GO" id="GO:0019031">
    <property type="term" value="C:viral envelope"/>
    <property type="evidence" value="ECO:0007669"/>
    <property type="project" value="InterPro"/>
</dbReference>
<dbReference type="GO" id="GO:0039660">
    <property type="term" value="F:structural constituent of virion"/>
    <property type="evidence" value="ECO:0007669"/>
    <property type="project" value="UniProtKB-KW"/>
</dbReference>
<dbReference type="GO" id="GO:0039702">
    <property type="term" value="P:viral budding via host ESCRT complex"/>
    <property type="evidence" value="ECO:0007669"/>
    <property type="project" value="UniProtKB-KW"/>
</dbReference>
<dbReference type="Gene3D" id="3.10.460.10">
    <property type="entry name" value="VSV matrix protein"/>
    <property type="match status" value="1"/>
</dbReference>
<dbReference type="InterPro" id="IPR009397">
    <property type="entry name" value="Vesiculo_matrix"/>
</dbReference>
<dbReference type="InterPro" id="IPR036711">
    <property type="entry name" value="VSV_matrix_sf"/>
</dbReference>
<dbReference type="Pfam" id="PF06326">
    <property type="entry name" value="Vesiculo_matrix"/>
    <property type="match status" value="1"/>
</dbReference>
<dbReference type="SUPFAM" id="SSF75404">
    <property type="entry name" value="VSV matrix protein"/>
    <property type="match status" value="1"/>
</dbReference>
<accession>Q5K2K5</accession>